<reference key="1">
    <citation type="journal article" date="1995" name="J. Vet. Med. Sci.">
        <title>Molecular cloning of cDNA for equine ovarian inhibin/activin beta A subunit.</title>
        <authorList>
            <person name="Yoshida S."/>
            <person name="Yamanouchi K."/>
            <person name="Hasegawa T."/>
            <person name="Ikeda A."/>
            <person name="Suzuki M."/>
            <person name="Chang K."/>
            <person name="Matsuyama S."/>
            <person name="Nishihara M."/>
            <person name="Takahashi M."/>
        </authorList>
    </citation>
    <scope>NUCLEOTIDE SEQUENCE [MRNA]</scope>
    <source>
        <tissue>Ovary</tissue>
    </source>
</reference>
<gene>
    <name type="primary">INHBA</name>
</gene>
<name>INHBA_HORSE</name>
<accession>P55102</accession>
<proteinExistence type="evidence at transcript level"/>
<comment type="function">
    <text evidence="2">Inhibins/activins are involved in regulating a number of diverse functions such as hypothalamic and pituitary hormone secretion, gonadal hormone secretion, germ cell development and maturation, erythroid differentiation, insulin secretion, nerve cell survival, embryonic axial development or bone growth, depending on their subunit composition.</text>
</comment>
<comment type="function">
    <text evidence="2">Activin A is a homodimer of INHBA that plays a role in several essential biological processes including embryonic development, stem cell maintenance and differentiation, haematopoiesis, cell proliferation and tissue fibrosis. Signals through type I (such as ACVR1B or ACVR1C) and type II receptors (such as ACVR2A, ACVR2B or BMPR2) which, upon ligand binding, phosphorylate SMAD2 and SMAD3 intracellular signaling mediators that form a complex with SMAD4, translocate to the nucleus and modulate gene expression. Can also activate alternative non-canonical intracellular signaling pathways including the p38 MAPK, extracellular signal-regulated kinases 1/2 (ERK1/2) and c-Jun N-terminal kinases (JNKs) to modulate cell migration and differentiation. Alternatively, promotes osteoblastic differentiation via ACVRL1-SMAD1/5/9 pathway. In addition, can engage the type I receptor ACVR1 to form an ACVR1-activin A-type II receptor non-signaling complex (NSC) that renders receptors unavailable for engagement with BMPs, hence resulting in an apparent inhibition of ACVR1-mediated BMP signaling.</text>
</comment>
<comment type="function">
    <text evidence="2">Inhibin A is a dimer of alpha/INHA and beta-A/INHBA that functions as a feedback regulator in the hypothalamic-pituitary-gonadal (HPG) axis. Inhibits the secretion of FSH from the anterior pituitary gland by acting on pituitary gonadotrope cells. Antagonizes activin A by binding to the proteoglycan, betaglycan, and forming a stable complex with and, thereby, sequestering type II activin receptors while excluding type I receptor.</text>
</comment>
<comment type="subunit">
    <text evidence="2">Dimeric, linked by one or more disulfide bonds. Inhibin A is a dimer of alpha/INHA and beta-A/INHBA. Activin A is a homodimer of beta-A/INHBA. Activin AB is a dimer of beta-A/INHBA and beta-B/INHBB. Interacts with FST and FSTL3; these interactions prevent activin A interaction to its type II receptor. Activin A interacts with ACVR2A. Activin A interacts with BMPR2. Inhibin A interacts with ACVR1; this interaction creates a non-signaling complex (NSC) that inhibits ACVR1-mediated BMP signaling. Inhibin A interacts with ACVR2A.</text>
</comment>
<comment type="subcellular location">
    <subcellularLocation>
        <location evidence="2">Secreted</location>
    </subcellularLocation>
</comment>
<comment type="similarity">
    <text evidence="5">Belongs to the TGF-beta family.</text>
</comment>
<feature type="signal peptide" evidence="1">
    <location>
        <begin position="1"/>
        <end position="20"/>
    </location>
</feature>
<feature type="propeptide" id="PRO_0000033706">
    <location>
        <begin position="21"/>
        <end position="310"/>
    </location>
</feature>
<feature type="chain" id="PRO_0000033707" description="Inhibin beta A chain">
    <location>
        <begin position="311"/>
        <end position="426"/>
    </location>
</feature>
<feature type="region of interest" description="Disordered" evidence="4">
    <location>
        <begin position="177"/>
        <end position="201"/>
    </location>
</feature>
<feature type="region of interest" description="Disordered" evidence="4">
    <location>
        <begin position="260"/>
        <end position="291"/>
    </location>
</feature>
<feature type="compositionally biased region" description="Polar residues" evidence="4">
    <location>
        <begin position="177"/>
        <end position="186"/>
    </location>
</feature>
<feature type="compositionally biased region" description="Basic and acidic residues" evidence="4">
    <location>
        <begin position="263"/>
        <end position="275"/>
    </location>
</feature>
<feature type="glycosylation site" description="N-linked (GlcNAc...) asparagine" evidence="3">
    <location>
        <position position="165"/>
    </location>
</feature>
<feature type="disulfide bond" evidence="1">
    <location>
        <begin position="314"/>
        <end position="322"/>
    </location>
</feature>
<feature type="disulfide bond" evidence="1">
    <location>
        <begin position="321"/>
        <end position="391"/>
    </location>
</feature>
<feature type="disulfide bond" evidence="1">
    <location>
        <begin position="350"/>
        <end position="423"/>
    </location>
</feature>
<feature type="disulfide bond" evidence="1">
    <location>
        <begin position="354"/>
        <end position="425"/>
    </location>
</feature>
<feature type="disulfide bond" description="Interchain" evidence="1">
    <location>
        <position position="390"/>
    </location>
</feature>
<organism>
    <name type="scientific">Equus caballus</name>
    <name type="common">Horse</name>
    <dbReference type="NCBI Taxonomy" id="9796"/>
    <lineage>
        <taxon>Eukaryota</taxon>
        <taxon>Metazoa</taxon>
        <taxon>Chordata</taxon>
        <taxon>Craniata</taxon>
        <taxon>Vertebrata</taxon>
        <taxon>Euteleostomi</taxon>
        <taxon>Mammalia</taxon>
        <taxon>Eutheria</taxon>
        <taxon>Laurasiatheria</taxon>
        <taxon>Perissodactyla</taxon>
        <taxon>Equidae</taxon>
        <taxon>Equus</taxon>
    </lineage>
</organism>
<protein>
    <recommendedName>
        <fullName>Inhibin beta A chain</fullName>
    </recommendedName>
    <alternativeName>
        <fullName>Activin beta-A chain</fullName>
    </alternativeName>
</protein>
<evidence type="ECO:0000250" key="1"/>
<evidence type="ECO:0000250" key="2">
    <source>
        <dbReference type="UniProtKB" id="P08476"/>
    </source>
</evidence>
<evidence type="ECO:0000255" key="3"/>
<evidence type="ECO:0000256" key="4">
    <source>
        <dbReference type="SAM" id="MobiDB-lite"/>
    </source>
</evidence>
<evidence type="ECO:0000305" key="5"/>
<dbReference type="EMBL" id="D50326">
    <property type="protein sequence ID" value="BAA08862.1"/>
    <property type="molecule type" value="mRNA"/>
</dbReference>
<dbReference type="RefSeq" id="NP_001075378.1">
    <property type="nucleotide sequence ID" value="NM_001081909.1"/>
</dbReference>
<dbReference type="SMR" id="P55102"/>
<dbReference type="FunCoup" id="P55102">
    <property type="interactions" value="180"/>
</dbReference>
<dbReference type="STRING" id="9796.ENSECAP00000019902"/>
<dbReference type="GlyCosmos" id="P55102">
    <property type="glycosylation" value="1 site, No reported glycans"/>
</dbReference>
<dbReference type="PaxDb" id="9796-ENSECAP00000019902"/>
<dbReference type="GeneID" id="100034076"/>
<dbReference type="KEGG" id="ecb:100034076"/>
<dbReference type="CTD" id="3624"/>
<dbReference type="InParanoid" id="P55102"/>
<dbReference type="OMA" id="CCKKHFY"/>
<dbReference type="OrthoDB" id="6516235at2759"/>
<dbReference type="Proteomes" id="UP000002281">
    <property type="component" value="Chromosome 4"/>
</dbReference>
<dbReference type="Bgee" id="ENSECAG00000022448">
    <property type="expression patterns" value="Expressed in articular cartilage of joint and 18 other cell types or tissues"/>
</dbReference>
<dbReference type="ExpressionAtlas" id="P55102">
    <property type="expression patterns" value="baseline"/>
</dbReference>
<dbReference type="GO" id="GO:0043509">
    <property type="term" value="C:activin A complex"/>
    <property type="evidence" value="ECO:0000250"/>
    <property type="project" value="UniProtKB"/>
</dbReference>
<dbReference type="GO" id="GO:0005576">
    <property type="term" value="C:extracellular region"/>
    <property type="evidence" value="ECO:0000250"/>
    <property type="project" value="UniProtKB"/>
</dbReference>
<dbReference type="GO" id="GO:0005615">
    <property type="term" value="C:extracellular space"/>
    <property type="evidence" value="ECO:0000318"/>
    <property type="project" value="GO_Central"/>
</dbReference>
<dbReference type="GO" id="GO:0043512">
    <property type="term" value="C:inhibin A complex"/>
    <property type="evidence" value="ECO:0000250"/>
    <property type="project" value="UniProtKB"/>
</dbReference>
<dbReference type="GO" id="GO:0005125">
    <property type="term" value="F:cytokine activity"/>
    <property type="evidence" value="ECO:0000250"/>
    <property type="project" value="UniProtKB"/>
</dbReference>
<dbReference type="GO" id="GO:0008083">
    <property type="term" value="F:growth factor activity"/>
    <property type="evidence" value="ECO:0007669"/>
    <property type="project" value="UniProtKB-KW"/>
</dbReference>
<dbReference type="GO" id="GO:0005179">
    <property type="term" value="F:hormone activity"/>
    <property type="evidence" value="ECO:0007669"/>
    <property type="project" value="UniProtKB-KW"/>
</dbReference>
<dbReference type="GO" id="GO:0032924">
    <property type="term" value="P:activin receptor signaling pathway"/>
    <property type="evidence" value="ECO:0000250"/>
    <property type="project" value="UniProtKB"/>
</dbReference>
<dbReference type="GO" id="GO:0061029">
    <property type="term" value="P:eyelid development in camera-type eye"/>
    <property type="evidence" value="ECO:0000250"/>
    <property type="project" value="UniProtKB"/>
</dbReference>
<dbReference type="GO" id="GO:0001942">
    <property type="term" value="P:hair follicle development"/>
    <property type="evidence" value="ECO:0000250"/>
    <property type="project" value="UniProtKB"/>
</dbReference>
<dbReference type="GO" id="GO:0002244">
    <property type="term" value="P:hematopoietic progenitor cell differentiation"/>
    <property type="evidence" value="ECO:0000250"/>
    <property type="project" value="UniProtKB"/>
</dbReference>
<dbReference type="GO" id="GO:0042541">
    <property type="term" value="P:hemoglobin biosynthetic process"/>
    <property type="evidence" value="ECO:0000250"/>
    <property type="project" value="UniProtKB"/>
</dbReference>
<dbReference type="GO" id="GO:0008584">
    <property type="term" value="P:male gonad development"/>
    <property type="evidence" value="ECO:0000250"/>
    <property type="project" value="UniProtKB"/>
</dbReference>
<dbReference type="GO" id="GO:0030308">
    <property type="term" value="P:negative regulation of cell growth"/>
    <property type="evidence" value="ECO:0000250"/>
    <property type="project" value="UniProtKB"/>
</dbReference>
<dbReference type="GO" id="GO:0008285">
    <property type="term" value="P:negative regulation of cell population proliferation"/>
    <property type="evidence" value="ECO:0000250"/>
    <property type="project" value="UniProtKB"/>
</dbReference>
<dbReference type="GO" id="GO:2000134">
    <property type="term" value="P:negative regulation of G1/S transition of mitotic cell cycle"/>
    <property type="evidence" value="ECO:0000250"/>
    <property type="project" value="UniProtKB"/>
</dbReference>
<dbReference type="GO" id="GO:0042476">
    <property type="term" value="P:odontogenesis"/>
    <property type="evidence" value="ECO:0000250"/>
    <property type="project" value="UniProtKB"/>
</dbReference>
<dbReference type="GO" id="GO:0001541">
    <property type="term" value="P:ovarian follicle development"/>
    <property type="evidence" value="ECO:0000250"/>
    <property type="project" value="UniProtKB"/>
</dbReference>
<dbReference type="GO" id="GO:0045893">
    <property type="term" value="P:positive regulation of DNA-templated transcription"/>
    <property type="evidence" value="ECO:0000250"/>
    <property type="project" value="UniProtKB"/>
</dbReference>
<dbReference type="GO" id="GO:0045648">
    <property type="term" value="P:positive regulation of erythrocyte differentiation"/>
    <property type="evidence" value="ECO:0000250"/>
    <property type="project" value="UniProtKB"/>
</dbReference>
<dbReference type="GO" id="GO:2001241">
    <property type="term" value="P:positive regulation of extrinsic apoptotic signaling pathway in absence of ligand"/>
    <property type="evidence" value="ECO:0000250"/>
    <property type="project" value="UniProtKB"/>
</dbReference>
<dbReference type="GO" id="GO:0060279">
    <property type="term" value="P:positive regulation of ovulation"/>
    <property type="evidence" value="ECO:0000250"/>
    <property type="project" value="UniProtKB"/>
</dbReference>
<dbReference type="GO" id="GO:0045944">
    <property type="term" value="P:positive regulation of transcription by RNA polymerase II"/>
    <property type="evidence" value="ECO:0000250"/>
    <property type="project" value="UniProtKB"/>
</dbReference>
<dbReference type="GO" id="GO:0042701">
    <property type="term" value="P:progesterone secretion"/>
    <property type="evidence" value="ECO:0000250"/>
    <property type="project" value="UniProtKB"/>
</dbReference>
<dbReference type="GO" id="GO:0046880">
    <property type="term" value="P:regulation of follicle-stimulating hormone secretion"/>
    <property type="evidence" value="ECO:0000250"/>
    <property type="project" value="UniProtKB"/>
</dbReference>
<dbReference type="GO" id="GO:0006357">
    <property type="term" value="P:regulation of transcription by RNA polymerase II"/>
    <property type="evidence" value="ECO:0000250"/>
    <property type="project" value="UniProtKB"/>
</dbReference>
<dbReference type="GO" id="GO:0060021">
    <property type="term" value="P:roof of mouth development"/>
    <property type="evidence" value="ECO:0000250"/>
    <property type="project" value="UniProtKB"/>
</dbReference>
<dbReference type="CDD" id="cd19404">
    <property type="entry name" value="TGF_beta_INHBA"/>
    <property type="match status" value="1"/>
</dbReference>
<dbReference type="FunFam" id="2.10.90.10:FF:000005">
    <property type="entry name" value="Inhibin beta A chain"/>
    <property type="match status" value="1"/>
</dbReference>
<dbReference type="FunFam" id="2.60.120.970:FF:000007">
    <property type="entry name" value="Inhibin beta A chain"/>
    <property type="match status" value="1"/>
</dbReference>
<dbReference type="Gene3D" id="2.60.120.970">
    <property type="match status" value="1"/>
</dbReference>
<dbReference type="Gene3D" id="2.10.90.10">
    <property type="entry name" value="Cystine-knot cytokines"/>
    <property type="match status" value="1"/>
</dbReference>
<dbReference type="InterPro" id="IPR029034">
    <property type="entry name" value="Cystine-knot_cytokine"/>
</dbReference>
<dbReference type="InterPro" id="IPR000491">
    <property type="entry name" value="Inhibin_betaA"/>
</dbReference>
<dbReference type="InterPro" id="IPR001839">
    <property type="entry name" value="TGF-b_C"/>
</dbReference>
<dbReference type="InterPro" id="IPR001111">
    <property type="entry name" value="TGF-b_propeptide"/>
</dbReference>
<dbReference type="InterPro" id="IPR015615">
    <property type="entry name" value="TGF-beta-rel"/>
</dbReference>
<dbReference type="InterPro" id="IPR017948">
    <property type="entry name" value="TGFb_CS"/>
</dbReference>
<dbReference type="PANTHER" id="PTHR11848:SF133">
    <property type="entry name" value="INHIBIN BETA A CHAIN"/>
    <property type="match status" value="1"/>
</dbReference>
<dbReference type="PANTHER" id="PTHR11848">
    <property type="entry name" value="TGF-BETA FAMILY"/>
    <property type="match status" value="1"/>
</dbReference>
<dbReference type="Pfam" id="PF00019">
    <property type="entry name" value="TGF_beta"/>
    <property type="match status" value="1"/>
</dbReference>
<dbReference type="Pfam" id="PF00688">
    <property type="entry name" value="TGFb_propeptide"/>
    <property type="match status" value="1"/>
</dbReference>
<dbReference type="PRINTS" id="PR00670">
    <property type="entry name" value="INHIBINBA"/>
</dbReference>
<dbReference type="SMART" id="SM00204">
    <property type="entry name" value="TGFB"/>
    <property type="match status" value="1"/>
</dbReference>
<dbReference type="SUPFAM" id="SSF57501">
    <property type="entry name" value="Cystine-knot cytokines"/>
    <property type="match status" value="1"/>
</dbReference>
<dbReference type="PROSITE" id="PS00250">
    <property type="entry name" value="TGF_BETA_1"/>
    <property type="match status" value="1"/>
</dbReference>
<dbReference type="PROSITE" id="PS51362">
    <property type="entry name" value="TGF_BETA_2"/>
    <property type="match status" value="1"/>
</dbReference>
<keyword id="KW-0165">Cleavage on pair of basic residues</keyword>
<keyword id="KW-1015">Disulfide bond</keyword>
<keyword id="KW-0325">Glycoprotein</keyword>
<keyword id="KW-0339">Growth factor</keyword>
<keyword id="KW-0372">Hormone</keyword>
<keyword id="KW-1185">Reference proteome</keyword>
<keyword id="KW-0964">Secreted</keyword>
<keyword id="KW-0732">Signal</keyword>
<sequence>MPLLWLRGFLLASCWIIVKSSPTPGSEGHSAAPNCPSCALATLPKDVPNAQPEMVEAVKKHILNMLHLKKRPDVTQPVPKAALLNAIRKLHVGKVGENGYVEIEDDIGRRAEMNELMEQTSEIITFAESGTARKTLHFEISKEGSDLSVVERAEVWLFLKVPKANRTRSKVTIRLLQQQKHPQGSSDTREEAEEADLMEERSEQLISEKVVDARKSTWHIFPVSSSIQRLLDQGKSSLDIRIACDQCHETGASLVLLGKKKKKEEEGEGKKKDGGEAGAGVDEEKEQSHRPFLMLQARQSEDHPHRRRRRGLECDGKVNICCKKQFFVSFKDIGWNDWIIAPSGYHANYCEGECPSHIAGTSGSSLSFHSTVINQYRLRGHNPFANLKSCCVPTKLRPMSMLYYDDGQNIIKKDIQNMIVEECGCS</sequence>